<feature type="chain" id="PRO_0000086647" description="Serine/threonine-protein kinase Sgk2">
    <location>
        <begin position="1"/>
        <end position="367"/>
    </location>
</feature>
<feature type="domain" description="Protein kinase" evidence="4">
    <location>
        <begin position="35"/>
        <end position="292"/>
    </location>
</feature>
<feature type="domain" description="AGC-kinase C-terminal" evidence="5">
    <location>
        <begin position="293"/>
        <end position="367"/>
    </location>
</feature>
<feature type="region of interest" description="Disordered" evidence="7">
    <location>
        <begin position="1"/>
        <end position="28"/>
    </location>
</feature>
<feature type="short sequence motif" description="Nuclear localization signal" evidence="1">
    <location>
        <begin position="68"/>
        <end position="78"/>
    </location>
</feature>
<feature type="compositionally biased region" description="Polar residues" evidence="7">
    <location>
        <begin position="15"/>
        <end position="28"/>
    </location>
</feature>
<feature type="active site" description="Proton acceptor" evidence="4 6">
    <location>
        <position position="159"/>
    </location>
</feature>
<feature type="binding site" evidence="4">
    <location>
        <begin position="41"/>
        <end position="49"/>
    </location>
    <ligand>
        <name>ATP</name>
        <dbReference type="ChEBI" id="CHEBI:30616"/>
    </ligand>
</feature>
<feature type="binding site" evidence="4">
    <location>
        <position position="64"/>
    </location>
    <ligand>
        <name>ATP</name>
        <dbReference type="ChEBI" id="CHEBI:30616"/>
    </ligand>
</feature>
<feature type="modified residue" description="Phosphoserine" evidence="2">
    <location>
        <position position="10"/>
    </location>
</feature>
<feature type="modified residue" description="Phosphothreonine; by PDPK1" evidence="3">
    <location>
        <position position="193"/>
    </location>
</feature>
<feature type="modified residue" description="Phosphoserine" evidence="5">
    <location>
        <position position="334"/>
    </location>
</feature>
<feature type="modified residue" description="Phosphoserine" evidence="5">
    <location>
        <position position="356"/>
    </location>
</feature>
<feature type="modified residue" description="Phosphotyrosine" evidence="5">
    <location>
        <position position="357"/>
    </location>
</feature>
<feature type="splice variant" id="VSP_004933" description="In isoform 2." evidence="11">
    <location>
        <begin position="171"/>
        <end position="199"/>
    </location>
</feature>
<feature type="sequence conflict" description="In Ref. 4; AAH26549." evidence="12" ref="4">
    <location>
        <position position="77"/>
    </location>
</feature>
<evidence type="ECO:0000250" key="1"/>
<evidence type="ECO:0000250" key="2">
    <source>
        <dbReference type="UniProtKB" id="Q8R4U9"/>
    </source>
</evidence>
<evidence type="ECO:0000250" key="3">
    <source>
        <dbReference type="UniProtKB" id="Q9HBY8"/>
    </source>
</evidence>
<evidence type="ECO:0000255" key="4">
    <source>
        <dbReference type="PROSITE-ProRule" id="PRU00159"/>
    </source>
</evidence>
<evidence type="ECO:0000255" key="5">
    <source>
        <dbReference type="PROSITE-ProRule" id="PRU00618"/>
    </source>
</evidence>
<evidence type="ECO:0000255" key="6">
    <source>
        <dbReference type="PROSITE-ProRule" id="PRU10027"/>
    </source>
</evidence>
<evidence type="ECO:0000256" key="7">
    <source>
        <dbReference type="SAM" id="MobiDB-lite"/>
    </source>
</evidence>
<evidence type="ECO:0000269" key="8">
    <source>
    </source>
</evidence>
<evidence type="ECO:0000269" key="9">
    <source>
    </source>
</evidence>
<evidence type="ECO:0000269" key="10">
    <source>
    </source>
</evidence>
<evidence type="ECO:0000303" key="11">
    <source>
    </source>
</evidence>
<evidence type="ECO:0000305" key="12"/>
<comment type="function">
    <text evidence="8 9 10">Serine/threonine-protein kinase which is involved in the regulation of a wide variety of ion channels, membrane transporters, cell growth, survival and proliferation. Up-regulates Na(+) channels: SCNN1A/ENAC, K(+) channels: KCNA3/Kv1.3, KCNE1 and KCNQ1, amino acid transporter: SLC6A19, glutamate transporter: SLC1A6/EAAT4, glutamate receptors: GRIA1/GLUR1 and GRIK2/GLUR6, Na(+)/H(+) exchanger: SLC9A3/NHE3, and the Na(+)/K(+) ATPase.</text>
</comment>
<comment type="catalytic activity">
    <reaction>
        <text>L-seryl-[protein] + ATP = O-phospho-L-seryl-[protein] + ADP + H(+)</text>
        <dbReference type="Rhea" id="RHEA:17989"/>
        <dbReference type="Rhea" id="RHEA-COMP:9863"/>
        <dbReference type="Rhea" id="RHEA-COMP:11604"/>
        <dbReference type="ChEBI" id="CHEBI:15378"/>
        <dbReference type="ChEBI" id="CHEBI:29999"/>
        <dbReference type="ChEBI" id="CHEBI:30616"/>
        <dbReference type="ChEBI" id="CHEBI:83421"/>
        <dbReference type="ChEBI" id="CHEBI:456216"/>
        <dbReference type="EC" id="2.7.11.1"/>
    </reaction>
</comment>
<comment type="catalytic activity">
    <reaction>
        <text>L-threonyl-[protein] + ATP = O-phospho-L-threonyl-[protein] + ADP + H(+)</text>
        <dbReference type="Rhea" id="RHEA:46608"/>
        <dbReference type="Rhea" id="RHEA-COMP:11060"/>
        <dbReference type="Rhea" id="RHEA-COMP:11605"/>
        <dbReference type="ChEBI" id="CHEBI:15378"/>
        <dbReference type="ChEBI" id="CHEBI:30013"/>
        <dbReference type="ChEBI" id="CHEBI:30616"/>
        <dbReference type="ChEBI" id="CHEBI:61977"/>
        <dbReference type="ChEBI" id="CHEBI:456216"/>
        <dbReference type="EC" id="2.7.11.1"/>
    </reaction>
</comment>
<comment type="activity regulation">
    <text>Two specific sites, one in the kinase domain (Thr-193) and the other in the C-terminal regulatory region (Ser-356), need to be phosphorylated for its full activation.</text>
</comment>
<comment type="subcellular location">
    <subcellularLocation>
        <location evidence="1">Cytoplasm</location>
    </subcellularLocation>
    <subcellularLocation>
        <location evidence="1">Nucleus</location>
    </subcellularLocation>
</comment>
<comment type="alternative products">
    <event type="alternative splicing"/>
    <isoform>
        <id>Q9QZS5-1</id>
        <name>1</name>
        <sequence type="displayed"/>
    </isoform>
    <isoform>
        <id>Q9QZS5-2</id>
        <name>2</name>
        <sequence type="described" ref="VSP_004933"/>
    </isoform>
</comment>
<comment type="PTM">
    <text evidence="1">Activated by phosphorylation on Ser-356 by an unknown kinase (may be mTORC2 but not confirmed), transforming it into a substrate for PDPK1 which then phosphorylates it on Thr-193.</text>
</comment>
<comment type="similarity">
    <text evidence="12">Belongs to the protein kinase superfamily. AGC Ser/Thr protein kinase family.</text>
</comment>
<comment type="caution">
    <text evidence="12">Not regulated by serum or glucocorticoids.</text>
</comment>
<protein>
    <recommendedName>
        <fullName>Serine/threonine-protein kinase Sgk2</fullName>
        <ecNumber>2.7.11.1</ecNumber>
    </recommendedName>
    <alternativeName>
        <fullName>Serum/glucocorticoid-regulated kinase 2</fullName>
    </alternativeName>
</protein>
<reference key="1">
    <citation type="journal article" date="1999" name="Biochem. J.">
        <title>Characterization of the structure and regulation of two novel isoforms of serum- and glucocorticoid-induced protein kinase.</title>
        <authorList>
            <person name="Kobayashi T."/>
            <person name="Deak M."/>
            <person name="Morrice N."/>
            <person name="Cohen P."/>
        </authorList>
    </citation>
    <scope>NUCLEOTIDE SEQUENCE [MRNA] (ISOFORM 1)</scope>
</reference>
<reference key="2">
    <citation type="journal article" date="2005" name="Science">
        <title>The transcriptional landscape of the mammalian genome.</title>
        <authorList>
            <person name="Carninci P."/>
            <person name="Kasukawa T."/>
            <person name="Katayama S."/>
            <person name="Gough J."/>
            <person name="Frith M.C."/>
            <person name="Maeda N."/>
            <person name="Oyama R."/>
            <person name="Ravasi T."/>
            <person name="Lenhard B."/>
            <person name="Wells C."/>
            <person name="Kodzius R."/>
            <person name="Shimokawa K."/>
            <person name="Bajic V.B."/>
            <person name="Brenner S.E."/>
            <person name="Batalov S."/>
            <person name="Forrest A.R."/>
            <person name="Zavolan M."/>
            <person name="Davis M.J."/>
            <person name="Wilming L.G."/>
            <person name="Aidinis V."/>
            <person name="Allen J.E."/>
            <person name="Ambesi-Impiombato A."/>
            <person name="Apweiler R."/>
            <person name="Aturaliya R.N."/>
            <person name="Bailey T.L."/>
            <person name="Bansal M."/>
            <person name="Baxter L."/>
            <person name="Beisel K.W."/>
            <person name="Bersano T."/>
            <person name="Bono H."/>
            <person name="Chalk A.M."/>
            <person name="Chiu K.P."/>
            <person name="Choudhary V."/>
            <person name="Christoffels A."/>
            <person name="Clutterbuck D.R."/>
            <person name="Crowe M.L."/>
            <person name="Dalla E."/>
            <person name="Dalrymple B.P."/>
            <person name="de Bono B."/>
            <person name="Della Gatta G."/>
            <person name="di Bernardo D."/>
            <person name="Down T."/>
            <person name="Engstrom P."/>
            <person name="Fagiolini M."/>
            <person name="Faulkner G."/>
            <person name="Fletcher C.F."/>
            <person name="Fukushima T."/>
            <person name="Furuno M."/>
            <person name="Futaki S."/>
            <person name="Gariboldi M."/>
            <person name="Georgii-Hemming P."/>
            <person name="Gingeras T.R."/>
            <person name="Gojobori T."/>
            <person name="Green R.E."/>
            <person name="Gustincich S."/>
            <person name="Harbers M."/>
            <person name="Hayashi Y."/>
            <person name="Hensch T.K."/>
            <person name="Hirokawa N."/>
            <person name="Hill D."/>
            <person name="Huminiecki L."/>
            <person name="Iacono M."/>
            <person name="Ikeo K."/>
            <person name="Iwama A."/>
            <person name="Ishikawa T."/>
            <person name="Jakt M."/>
            <person name="Kanapin A."/>
            <person name="Katoh M."/>
            <person name="Kawasawa Y."/>
            <person name="Kelso J."/>
            <person name="Kitamura H."/>
            <person name="Kitano H."/>
            <person name="Kollias G."/>
            <person name="Krishnan S.P."/>
            <person name="Kruger A."/>
            <person name="Kummerfeld S.K."/>
            <person name="Kurochkin I.V."/>
            <person name="Lareau L.F."/>
            <person name="Lazarevic D."/>
            <person name="Lipovich L."/>
            <person name="Liu J."/>
            <person name="Liuni S."/>
            <person name="McWilliam S."/>
            <person name="Madan Babu M."/>
            <person name="Madera M."/>
            <person name="Marchionni L."/>
            <person name="Matsuda H."/>
            <person name="Matsuzawa S."/>
            <person name="Miki H."/>
            <person name="Mignone F."/>
            <person name="Miyake S."/>
            <person name="Morris K."/>
            <person name="Mottagui-Tabar S."/>
            <person name="Mulder N."/>
            <person name="Nakano N."/>
            <person name="Nakauchi H."/>
            <person name="Ng P."/>
            <person name="Nilsson R."/>
            <person name="Nishiguchi S."/>
            <person name="Nishikawa S."/>
            <person name="Nori F."/>
            <person name="Ohara O."/>
            <person name="Okazaki Y."/>
            <person name="Orlando V."/>
            <person name="Pang K.C."/>
            <person name="Pavan W.J."/>
            <person name="Pavesi G."/>
            <person name="Pesole G."/>
            <person name="Petrovsky N."/>
            <person name="Piazza S."/>
            <person name="Reed J."/>
            <person name="Reid J.F."/>
            <person name="Ring B.Z."/>
            <person name="Ringwald M."/>
            <person name="Rost B."/>
            <person name="Ruan Y."/>
            <person name="Salzberg S.L."/>
            <person name="Sandelin A."/>
            <person name="Schneider C."/>
            <person name="Schoenbach C."/>
            <person name="Sekiguchi K."/>
            <person name="Semple C.A."/>
            <person name="Seno S."/>
            <person name="Sessa L."/>
            <person name="Sheng Y."/>
            <person name="Shibata Y."/>
            <person name="Shimada H."/>
            <person name="Shimada K."/>
            <person name="Silva D."/>
            <person name="Sinclair B."/>
            <person name="Sperling S."/>
            <person name="Stupka E."/>
            <person name="Sugiura K."/>
            <person name="Sultana R."/>
            <person name="Takenaka Y."/>
            <person name="Taki K."/>
            <person name="Tammoja K."/>
            <person name="Tan S.L."/>
            <person name="Tang S."/>
            <person name="Taylor M.S."/>
            <person name="Tegner J."/>
            <person name="Teichmann S.A."/>
            <person name="Ueda H.R."/>
            <person name="van Nimwegen E."/>
            <person name="Verardo R."/>
            <person name="Wei C.L."/>
            <person name="Yagi K."/>
            <person name="Yamanishi H."/>
            <person name="Zabarovsky E."/>
            <person name="Zhu S."/>
            <person name="Zimmer A."/>
            <person name="Hide W."/>
            <person name="Bult C."/>
            <person name="Grimmond S.M."/>
            <person name="Teasdale R.D."/>
            <person name="Liu E.T."/>
            <person name="Brusic V."/>
            <person name="Quackenbush J."/>
            <person name="Wahlestedt C."/>
            <person name="Mattick J.S."/>
            <person name="Hume D.A."/>
            <person name="Kai C."/>
            <person name="Sasaki D."/>
            <person name="Tomaru Y."/>
            <person name="Fukuda S."/>
            <person name="Kanamori-Katayama M."/>
            <person name="Suzuki M."/>
            <person name="Aoki J."/>
            <person name="Arakawa T."/>
            <person name="Iida J."/>
            <person name="Imamura K."/>
            <person name="Itoh M."/>
            <person name="Kato T."/>
            <person name="Kawaji H."/>
            <person name="Kawagashira N."/>
            <person name="Kawashima T."/>
            <person name="Kojima M."/>
            <person name="Kondo S."/>
            <person name="Konno H."/>
            <person name="Nakano K."/>
            <person name="Ninomiya N."/>
            <person name="Nishio T."/>
            <person name="Okada M."/>
            <person name="Plessy C."/>
            <person name="Shibata K."/>
            <person name="Shiraki T."/>
            <person name="Suzuki S."/>
            <person name="Tagami M."/>
            <person name="Waki K."/>
            <person name="Watahiki A."/>
            <person name="Okamura-Oho Y."/>
            <person name="Suzuki H."/>
            <person name="Kawai J."/>
            <person name="Hayashizaki Y."/>
        </authorList>
    </citation>
    <scope>NUCLEOTIDE SEQUENCE [LARGE SCALE MRNA] (ISOFORM 2)</scope>
    <source>
        <strain>C57BL/6J</strain>
        <tissue>Kidney</tissue>
    </source>
</reference>
<reference key="3">
    <citation type="journal article" date="2009" name="PLoS Biol.">
        <title>Lineage-specific biology revealed by a finished genome assembly of the mouse.</title>
        <authorList>
            <person name="Church D.M."/>
            <person name="Goodstadt L."/>
            <person name="Hillier L.W."/>
            <person name="Zody M.C."/>
            <person name="Goldstein S."/>
            <person name="She X."/>
            <person name="Bult C.J."/>
            <person name="Agarwala R."/>
            <person name="Cherry J.L."/>
            <person name="DiCuccio M."/>
            <person name="Hlavina W."/>
            <person name="Kapustin Y."/>
            <person name="Meric P."/>
            <person name="Maglott D."/>
            <person name="Birtle Z."/>
            <person name="Marques A.C."/>
            <person name="Graves T."/>
            <person name="Zhou S."/>
            <person name="Teague B."/>
            <person name="Potamousis K."/>
            <person name="Churas C."/>
            <person name="Place M."/>
            <person name="Herschleb J."/>
            <person name="Runnheim R."/>
            <person name="Forrest D."/>
            <person name="Amos-Landgraf J."/>
            <person name="Schwartz D.C."/>
            <person name="Cheng Z."/>
            <person name="Lindblad-Toh K."/>
            <person name="Eichler E.E."/>
            <person name="Ponting C.P."/>
        </authorList>
    </citation>
    <scope>NUCLEOTIDE SEQUENCE [LARGE SCALE GENOMIC DNA]</scope>
    <source>
        <strain>C57BL/6J</strain>
    </source>
</reference>
<reference key="4">
    <citation type="journal article" date="2004" name="Genome Res.">
        <title>The status, quality, and expansion of the NIH full-length cDNA project: the Mammalian Gene Collection (MGC).</title>
        <authorList>
            <consortium name="The MGC Project Team"/>
        </authorList>
    </citation>
    <scope>NUCLEOTIDE SEQUENCE [LARGE SCALE MRNA] (ISOFORM 1)</scope>
    <source>
        <tissue>Kidney</tissue>
    </source>
</reference>
<reference key="5">
    <citation type="journal article" date="2005" name="J. Physiol. (Lond.)">
        <title>Regulation of GluR1 abundance in murine hippocampal neurones by serum- and glucocorticoid-inducible kinase 3.</title>
        <authorList>
            <person name="Strutz-Seebohm N."/>
            <person name="Seebohm G."/>
            <person name="Mack A.F."/>
            <person name="Wagner H.J."/>
            <person name="Just L."/>
            <person name="Skutella T."/>
            <person name="Lang U.E."/>
            <person name="Henke G."/>
            <person name="Striegel M."/>
            <person name="Hollmann M."/>
            <person name="Rouach N."/>
            <person name="Nicoll R.A."/>
            <person name="McCormick J.A."/>
            <person name="Wang J."/>
            <person name="Pearce D."/>
            <person name="Lang F."/>
        </authorList>
    </citation>
    <scope>FUNCTION IN THE REGULATION OF GRIA1/GLUR1</scope>
</reference>
<reference key="6">
    <citation type="journal article" date="2005" name="J. Physiol. (Lond.)">
        <title>Glucocorticoid adrenal steroids and glucocorticoid-inducible kinase isoforms in the regulation of GluR6 expression.</title>
        <authorList>
            <person name="Strutz-Seebohm N."/>
            <person name="Seebohm G."/>
            <person name="Shumilina E."/>
            <person name="Mack A.F."/>
            <person name="Wagner H.J."/>
            <person name="Lampert A."/>
            <person name="Grahammer F."/>
            <person name="Henke G."/>
            <person name="Just L."/>
            <person name="Skutella T."/>
            <person name="Hollmann M."/>
            <person name="Lang F."/>
        </authorList>
    </citation>
    <scope>FUNCTION IN THE REGULATION OF GRIK2/GLUR6</scope>
</reference>
<reference key="7">
    <citation type="journal article" date="2011" name="Mol. Biol. Cell">
        <title>Serum- and glucocorticoid-induced kinase 3 in recycling endosomes mediates acute activation of Na+/H+ exchanger NHE3 by glucocorticoids.</title>
        <authorList>
            <person name="He P."/>
            <person name="Lee S.J."/>
            <person name="Lin S."/>
            <person name="Seidler U."/>
            <person name="Lang F."/>
            <person name="Fejes-Toth G."/>
            <person name="Naray-Fejes-Toth A."/>
            <person name="Yun C.C."/>
        </authorList>
    </citation>
    <scope>FUNCTION IN THE REGULATION OF SLC9A3/NHE3</scope>
    <scope>SUBCELLULAR LOCATION</scope>
</reference>
<keyword id="KW-0025">Alternative splicing</keyword>
<keyword id="KW-0067">ATP-binding</keyword>
<keyword id="KW-0963">Cytoplasm</keyword>
<keyword id="KW-0418">Kinase</keyword>
<keyword id="KW-0547">Nucleotide-binding</keyword>
<keyword id="KW-0539">Nucleus</keyword>
<keyword id="KW-0597">Phosphoprotein</keyword>
<keyword id="KW-1185">Reference proteome</keyword>
<keyword id="KW-0723">Serine/threonine-protein kinase</keyword>
<keyword id="KW-0808">Transferase</keyword>
<accession>Q9QZS5</accession>
<accession>B7ZC31</accession>
<accession>Q8R0P6</accession>
<gene>
    <name type="primary">Sgk2</name>
</gene>
<proteinExistence type="evidence at protein level"/>
<name>SGK2_MOUSE</name>
<dbReference type="EC" id="2.7.11.1"/>
<dbReference type="EMBL" id="AF169033">
    <property type="protein sequence ID" value="AAF12756.1"/>
    <property type="molecule type" value="mRNA"/>
</dbReference>
<dbReference type="EMBL" id="AK050009">
    <property type="protein sequence ID" value="BAC34031.1"/>
    <property type="molecule type" value="mRNA"/>
</dbReference>
<dbReference type="EMBL" id="AL591584">
    <property type="status" value="NOT_ANNOTATED_CDS"/>
    <property type="molecule type" value="Genomic_DNA"/>
</dbReference>
<dbReference type="EMBL" id="BC026549">
    <property type="protein sequence ID" value="AAH26549.1"/>
    <property type="molecule type" value="mRNA"/>
</dbReference>
<dbReference type="CCDS" id="CCDS17004.1">
    <molecule id="Q9QZS5-1"/>
</dbReference>
<dbReference type="CCDS" id="CCDS71184.1">
    <molecule id="Q9QZS5-2"/>
</dbReference>
<dbReference type="RefSeq" id="NP_001278081.1">
    <property type="nucleotide sequence ID" value="NM_001291152.1"/>
</dbReference>
<dbReference type="RefSeq" id="NP_001278083.1">
    <molecule id="Q9QZS5-2"/>
    <property type="nucleotide sequence ID" value="NM_001291154.1"/>
</dbReference>
<dbReference type="RefSeq" id="NP_038759.1">
    <molecule id="Q9QZS5-1"/>
    <property type="nucleotide sequence ID" value="NM_013731.3"/>
</dbReference>
<dbReference type="RefSeq" id="XP_006499721.1">
    <molecule id="Q9QZS5-1"/>
    <property type="nucleotide sequence ID" value="XM_006499658.5"/>
</dbReference>
<dbReference type="RefSeq" id="XP_011237882.1">
    <molecule id="Q9QZS5-2"/>
    <property type="nucleotide sequence ID" value="XM_011239580.3"/>
</dbReference>
<dbReference type="SMR" id="Q9QZS5"/>
<dbReference type="FunCoup" id="Q9QZS5">
    <property type="interactions" value="648"/>
</dbReference>
<dbReference type="STRING" id="10090.ENSMUSP00000018012"/>
<dbReference type="iPTMnet" id="Q9QZS5"/>
<dbReference type="PhosphoSitePlus" id="Q9QZS5"/>
<dbReference type="jPOST" id="Q9QZS5"/>
<dbReference type="PaxDb" id="10090-ENSMUSP00000018012"/>
<dbReference type="ProteomicsDB" id="261012">
    <molecule id="Q9QZS5-1"/>
</dbReference>
<dbReference type="ProteomicsDB" id="261013">
    <molecule id="Q9QZS5-2"/>
</dbReference>
<dbReference type="Antibodypedia" id="1638">
    <property type="antibodies" value="331 antibodies from 33 providers"/>
</dbReference>
<dbReference type="DNASU" id="27219"/>
<dbReference type="Ensembl" id="ENSMUST00000018012.14">
    <molecule id="Q9QZS5-1"/>
    <property type="protein sequence ID" value="ENSMUSP00000018012.8"/>
    <property type="gene ID" value="ENSMUSG00000017868.17"/>
</dbReference>
<dbReference type="Ensembl" id="ENSMUST00000117123.2">
    <molecule id="Q9QZS5-2"/>
    <property type="protein sequence ID" value="ENSMUSP00000112468.2"/>
    <property type="gene ID" value="ENSMUSG00000017868.17"/>
</dbReference>
<dbReference type="GeneID" id="27219"/>
<dbReference type="KEGG" id="mmu:27219"/>
<dbReference type="UCSC" id="uc008nsf.2">
    <molecule id="Q9QZS5-2"/>
    <property type="organism name" value="mouse"/>
</dbReference>
<dbReference type="UCSC" id="uc008nsg.3">
    <molecule id="Q9QZS5-1"/>
    <property type="organism name" value="mouse"/>
</dbReference>
<dbReference type="AGR" id="MGI:1351318"/>
<dbReference type="CTD" id="10110"/>
<dbReference type="MGI" id="MGI:1351318">
    <property type="gene designation" value="Sgk2"/>
</dbReference>
<dbReference type="VEuPathDB" id="HostDB:ENSMUSG00000017868"/>
<dbReference type="eggNOG" id="KOG0598">
    <property type="taxonomic scope" value="Eukaryota"/>
</dbReference>
<dbReference type="GeneTree" id="ENSGT00940000153776"/>
<dbReference type="HOGENOM" id="CLU_000288_63_5_1"/>
<dbReference type="InParanoid" id="Q9QZS5"/>
<dbReference type="OMA" id="PRANGNI"/>
<dbReference type="OrthoDB" id="63267at2759"/>
<dbReference type="PhylomeDB" id="Q9QZS5"/>
<dbReference type="TreeFam" id="TF320906"/>
<dbReference type="Reactome" id="R-MMU-2672351">
    <property type="pathway name" value="Stimuli-sensing channels"/>
</dbReference>
<dbReference type="BioGRID-ORCS" id="27219">
    <property type="hits" value="2 hits in 79 CRISPR screens"/>
</dbReference>
<dbReference type="ChiTaRS" id="Sgk2">
    <property type="organism name" value="mouse"/>
</dbReference>
<dbReference type="PRO" id="PR:Q9QZS5"/>
<dbReference type="Proteomes" id="UP000000589">
    <property type="component" value="Chromosome 2"/>
</dbReference>
<dbReference type="RNAct" id="Q9QZS5">
    <property type="molecule type" value="protein"/>
</dbReference>
<dbReference type="Bgee" id="ENSMUSG00000017868">
    <property type="expression patterns" value="Expressed in right kidney and 74 other cell types or tissues"/>
</dbReference>
<dbReference type="GO" id="GO:0005737">
    <property type="term" value="C:cytoplasm"/>
    <property type="evidence" value="ECO:0007669"/>
    <property type="project" value="UniProtKB-SubCell"/>
</dbReference>
<dbReference type="GO" id="GO:0005654">
    <property type="term" value="C:nucleoplasm"/>
    <property type="evidence" value="ECO:0007669"/>
    <property type="project" value="Ensembl"/>
</dbReference>
<dbReference type="GO" id="GO:0005524">
    <property type="term" value="F:ATP binding"/>
    <property type="evidence" value="ECO:0007669"/>
    <property type="project" value="UniProtKB-KW"/>
</dbReference>
<dbReference type="GO" id="GO:0015459">
    <property type="term" value="F:potassium channel regulator activity"/>
    <property type="evidence" value="ECO:0000250"/>
    <property type="project" value="UniProtKB"/>
</dbReference>
<dbReference type="GO" id="GO:0106310">
    <property type="term" value="F:protein serine kinase activity"/>
    <property type="evidence" value="ECO:0007669"/>
    <property type="project" value="RHEA"/>
</dbReference>
<dbReference type="GO" id="GO:0004674">
    <property type="term" value="F:protein serine/threonine kinase activity"/>
    <property type="evidence" value="ECO:0007669"/>
    <property type="project" value="UniProtKB-KW"/>
</dbReference>
<dbReference type="FunFam" id="1.10.510.10:FF:000065">
    <property type="entry name" value="Non-specific serine/threonine protein kinase"/>
    <property type="match status" value="1"/>
</dbReference>
<dbReference type="FunFam" id="3.30.200.20:FF:000030">
    <property type="entry name" value="Non-specific serine/threonine protein kinase"/>
    <property type="match status" value="1"/>
</dbReference>
<dbReference type="Gene3D" id="3.30.200.20">
    <property type="entry name" value="Phosphorylase Kinase, domain 1"/>
    <property type="match status" value="1"/>
</dbReference>
<dbReference type="Gene3D" id="1.10.510.10">
    <property type="entry name" value="Transferase(Phosphotransferase) domain 1"/>
    <property type="match status" value="1"/>
</dbReference>
<dbReference type="InterPro" id="IPR000961">
    <property type="entry name" value="AGC-kinase_C"/>
</dbReference>
<dbReference type="InterPro" id="IPR011009">
    <property type="entry name" value="Kinase-like_dom_sf"/>
</dbReference>
<dbReference type="InterPro" id="IPR017892">
    <property type="entry name" value="Pkinase_C"/>
</dbReference>
<dbReference type="InterPro" id="IPR000719">
    <property type="entry name" value="Prot_kinase_dom"/>
</dbReference>
<dbReference type="InterPro" id="IPR017441">
    <property type="entry name" value="Protein_kinase_ATP_BS"/>
</dbReference>
<dbReference type="InterPro" id="IPR008271">
    <property type="entry name" value="Ser/Thr_kinase_AS"/>
</dbReference>
<dbReference type="PANTHER" id="PTHR24351">
    <property type="entry name" value="RIBOSOMAL PROTEIN S6 KINASE"/>
    <property type="match status" value="1"/>
</dbReference>
<dbReference type="Pfam" id="PF00069">
    <property type="entry name" value="Pkinase"/>
    <property type="match status" value="1"/>
</dbReference>
<dbReference type="Pfam" id="PF00433">
    <property type="entry name" value="Pkinase_C"/>
    <property type="match status" value="1"/>
</dbReference>
<dbReference type="SMART" id="SM00133">
    <property type="entry name" value="S_TK_X"/>
    <property type="match status" value="1"/>
</dbReference>
<dbReference type="SMART" id="SM00220">
    <property type="entry name" value="S_TKc"/>
    <property type="match status" value="1"/>
</dbReference>
<dbReference type="SUPFAM" id="SSF56112">
    <property type="entry name" value="Protein kinase-like (PK-like)"/>
    <property type="match status" value="1"/>
</dbReference>
<dbReference type="PROSITE" id="PS51285">
    <property type="entry name" value="AGC_KINASE_CTER"/>
    <property type="match status" value="1"/>
</dbReference>
<dbReference type="PROSITE" id="PS00107">
    <property type="entry name" value="PROTEIN_KINASE_ATP"/>
    <property type="match status" value="1"/>
</dbReference>
<dbReference type="PROSITE" id="PS50011">
    <property type="entry name" value="PROTEIN_KINASE_DOM"/>
    <property type="match status" value="1"/>
</dbReference>
<dbReference type="PROSITE" id="PS00108">
    <property type="entry name" value="PROTEIN_KINASE_ST"/>
    <property type="match status" value="1"/>
</dbReference>
<sequence>MASSPVGVPSPQPSRANGNINLGPSANPNARPTDFDFLKVIGKGNYGKVLLAKRKSDGAFYAVKVLQKKSILKNKEQNHIMAERNVLLKNVRHPFLVGLRYSFQTPEKLYFVLDYVNGGELFFHLQRERRFLEPRARFYTAEVASAIGYLHSLNIIYRDLKPENILLDCQGHVVLTDFGLCKECVEPEETTSTFCGTPEYLAPEVLRKEPYDRAVDWWCLGAVLYEMLHGLPPFFNTDVAQMYENILHQPLQIPGGRTVAACDLLQGLLHKDQRQRLGSKEDFLDIKNHMFFSPINWDDLYHKRLTPPFNPNVEGPADLKHFDPEFTQEAVSKSIGCTPDTVASSSGASSAFLGFSYAQDDDDILDS</sequence>
<organism>
    <name type="scientific">Mus musculus</name>
    <name type="common">Mouse</name>
    <dbReference type="NCBI Taxonomy" id="10090"/>
    <lineage>
        <taxon>Eukaryota</taxon>
        <taxon>Metazoa</taxon>
        <taxon>Chordata</taxon>
        <taxon>Craniata</taxon>
        <taxon>Vertebrata</taxon>
        <taxon>Euteleostomi</taxon>
        <taxon>Mammalia</taxon>
        <taxon>Eutheria</taxon>
        <taxon>Euarchontoglires</taxon>
        <taxon>Glires</taxon>
        <taxon>Rodentia</taxon>
        <taxon>Myomorpha</taxon>
        <taxon>Muroidea</taxon>
        <taxon>Muridae</taxon>
        <taxon>Murinae</taxon>
        <taxon>Mus</taxon>
        <taxon>Mus</taxon>
    </lineage>
</organism>